<gene>
    <name evidence="1" type="primary">obg</name>
    <name type="ordered locus">CLH_0565</name>
</gene>
<dbReference type="EC" id="3.6.5.-" evidence="1"/>
<dbReference type="EMBL" id="CP001078">
    <property type="protein sequence ID" value="ACD52563.1"/>
    <property type="molecule type" value="Genomic_DNA"/>
</dbReference>
<dbReference type="SMR" id="B2V0A8"/>
<dbReference type="KEGG" id="cbt:CLH_0565"/>
<dbReference type="HOGENOM" id="CLU_011747_2_1_9"/>
<dbReference type="GO" id="GO:0005737">
    <property type="term" value="C:cytoplasm"/>
    <property type="evidence" value="ECO:0007669"/>
    <property type="project" value="UniProtKB-SubCell"/>
</dbReference>
<dbReference type="GO" id="GO:0005525">
    <property type="term" value="F:GTP binding"/>
    <property type="evidence" value="ECO:0007669"/>
    <property type="project" value="UniProtKB-UniRule"/>
</dbReference>
<dbReference type="GO" id="GO:0003924">
    <property type="term" value="F:GTPase activity"/>
    <property type="evidence" value="ECO:0007669"/>
    <property type="project" value="UniProtKB-UniRule"/>
</dbReference>
<dbReference type="GO" id="GO:0000287">
    <property type="term" value="F:magnesium ion binding"/>
    <property type="evidence" value="ECO:0007669"/>
    <property type="project" value="InterPro"/>
</dbReference>
<dbReference type="GO" id="GO:0042254">
    <property type="term" value="P:ribosome biogenesis"/>
    <property type="evidence" value="ECO:0007669"/>
    <property type="project" value="UniProtKB-UniRule"/>
</dbReference>
<dbReference type="CDD" id="cd01898">
    <property type="entry name" value="Obg"/>
    <property type="match status" value="1"/>
</dbReference>
<dbReference type="FunFam" id="2.70.210.12:FF:000001">
    <property type="entry name" value="GTPase Obg"/>
    <property type="match status" value="1"/>
</dbReference>
<dbReference type="Gene3D" id="3.30.300.350">
    <property type="entry name" value="GTP-binding protein OBG, C-terminal domain"/>
    <property type="match status" value="1"/>
</dbReference>
<dbReference type="Gene3D" id="2.70.210.12">
    <property type="entry name" value="GTP1/OBG domain"/>
    <property type="match status" value="1"/>
</dbReference>
<dbReference type="Gene3D" id="3.40.50.300">
    <property type="entry name" value="P-loop containing nucleotide triphosphate hydrolases"/>
    <property type="match status" value="1"/>
</dbReference>
<dbReference type="HAMAP" id="MF_01454">
    <property type="entry name" value="GTPase_Obg"/>
    <property type="match status" value="1"/>
</dbReference>
<dbReference type="InterPro" id="IPR031167">
    <property type="entry name" value="G_OBG"/>
</dbReference>
<dbReference type="InterPro" id="IPR006073">
    <property type="entry name" value="GTP-bd"/>
</dbReference>
<dbReference type="InterPro" id="IPR014100">
    <property type="entry name" value="GTP-bd_Obg/CgtA"/>
</dbReference>
<dbReference type="InterPro" id="IPR036346">
    <property type="entry name" value="GTP-bd_prot_GTP1/OBG_C_sf"/>
</dbReference>
<dbReference type="InterPro" id="IPR006074">
    <property type="entry name" value="GTP1-OBG_CS"/>
</dbReference>
<dbReference type="InterPro" id="IPR006169">
    <property type="entry name" value="GTP1_OBG_dom"/>
</dbReference>
<dbReference type="InterPro" id="IPR036726">
    <property type="entry name" value="GTP1_OBG_dom_sf"/>
</dbReference>
<dbReference type="InterPro" id="IPR045086">
    <property type="entry name" value="OBG_GTPase"/>
</dbReference>
<dbReference type="InterPro" id="IPR015349">
    <property type="entry name" value="OCT_dom"/>
</dbReference>
<dbReference type="InterPro" id="IPR027417">
    <property type="entry name" value="P-loop_NTPase"/>
</dbReference>
<dbReference type="InterPro" id="IPR005225">
    <property type="entry name" value="Small_GTP-bd"/>
</dbReference>
<dbReference type="NCBIfam" id="TIGR02729">
    <property type="entry name" value="Obg_CgtA"/>
    <property type="match status" value="1"/>
</dbReference>
<dbReference type="NCBIfam" id="TIGR03595">
    <property type="entry name" value="Obg_CgtA_exten"/>
    <property type="match status" value="1"/>
</dbReference>
<dbReference type="NCBIfam" id="NF008954">
    <property type="entry name" value="PRK12296.1"/>
    <property type="match status" value="1"/>
</dbReference>
<dbReference type="NCBIfam" id="NF008955">
    <property type="entry name" value="PRK12297.1"/>
    <property type="match status" value="1"/>
</dbReference>
<dbReference type="NCBIfam" id="NF008956">
    <property type="entry name" value="PRK12299.1"/>
    <property type="match status" value="1"/>
</dbReference>
<dbReference type="NCBIfam" id="TIGR00231">
    <property type="entry name" value="small_GTP"/>
    <property type="match status" value="1"/>
</dbReference>
<dbReference type="PANTHER" id="PTHR11702">
    <property type="entry name" value="DEVELOPMENTALLY REGULATED GTP-BINDING PROTEIN-RELATED"/>
    <property type="match status" value="1"/>
</dbReference>
<dbReference type="PANTHER" id="PTHR11702:SF31">
    <property type="entry name" value="MITOCHONDRIAL RIBOSOME-ASSOCIATED GTPASE 2"/>
    <property type="match status" value="1"/>
</dbReference>
<dbReference type="Pfam" id="PF09269">
    <property type="entry name" value="DUF1967"/>
    <property type="match status" value="1"/>
</dbReference>
<dbReference type="Pfam" id="PF01018">
    <property type="entry name" value="GTP1_OBG"/>
    <property type="match status" value="1"/>
</dbReference>
<dbReference type="Pfam" id="PF01926">
    <property type="entry name" value="MMR_HSR1"/>
    <property type="match status" value="1"/>
</dbReference>
<dbReference type="PIRSF" id="PIRSF002401">
    <property type="entry name" value="GTP_bd_Obg/CgtA"/>
    <property type="match status" value="1"/>
</dbReference>
<dbReference type="PRINTS" id="PR00326">
    <property type="entry name" value="GTP1OBG"/>
</dbReference>
<dbReference type="SUPFAM" id="SSF102741">
    <property type="entry name" value="Obg GTP-binding protein C-terminal domain"/>
    <property type="match status" value="1"/>
</dbReference>
<dbReference type="SUPFAM" id="SSF82051">
    <property type="entry name" value="Obg GTP-binding protein N-terminal domain"/>
    <property type="match status" value="1"/>
</dbReference>
<dbReference type="SUPFAM" id="SSF52540">
    <property type="entry name" value="P-loop containing nucleoside triphosphate hydrolases"/>
    <property type="match status" value="1"/>
</dbReference>
<dbReference type="PROSITE" id="PS51710">
    <property type="entry name" value="G_OBG"/>
    <property type="match status" value="1"/>
</dbReference>
<dbReference type="PROSITE" id="PS00905">
    <property type="entry name" value="GTP1_OBG"/>
    <property type="match status" value="1"/>
</dbReference>
<dbReference type="PROSITE" id="PS51883">
    <property type="entry name" value="OBG"/>
    <property type="match status" value="1"/>
</dbReference>
<dbReference type="PROSITE" id="PS51881">
    <property type="entry name" value="OCT"/>
    <property type="match status" value="1"/>
</dbReference>
<sequence>MFIDIAKVFIKSGKGGDGAISFRREKYVPLGGPNGGDGGDGGDIILKVDTGITTLLDFKYKKKFIAEDGENGGASKCYGRAGKDLIIKVPMGTIIREEESNKVIVDLSHKDQEFVLVKGGKGGKGNAKFATPTRQAPHYAEPGMPGDELSIVLELKLLADVGLLGFPNVGKSTLLSMTTKATPKIANYHFTTLKPNLGVVAVDGIEPFVMADIPGIIEGAAEGVGLGIQFLKHIERTRLLVHIVDISGLEGREPFEDFVKINEELKKYSVKLWDRPQIVVANKSDLLYDDEVFEEFERKVKELGFAKVYKMSAATRDGVDEVIKEAARMLKEIPVKELEISEDEMYIPEEKKFTYAIDIEKDEEYNTYVISGTFVDRLLSAVNIHDADSLRYFHKVLRNKGIMNELREMGIEDGDVVRLNDFEFEYLL</sequence>
<organism>
    <name type="scientific">Clostridium botulinum (strain Alaska E43 / Type E3)</name>
    <dbReference type="NCBI Taxonomy" id="508767"/>
    <lineage>
        <taxon>Bacteria</taxon>
        <taxon>Bacillati</taxon>
        <taxon>Bacillota</taxon>
        <taxon>Clostridia</taxon>
        <taxon>Eubacteriales</taxon>
        <taxon>Clostridiaceae</taxon>
        <taxon>Clostridium</taxon>
    </lineage>
</organism>
<evidence type="ECO:0000255" key="1">
    <source>
        <dbReference type="HAMAP-Rule" id="MF_01454"/>
    </source>
</evidence>
<evidence type="ECO:0000255" key="2">
    <source>
        <dbReference type="PROSITE-ProRule" id="PRU01229"/>
    </source>
</evidence>
<evidence type="ECO:0000255" key="3">
    <source>
        <dbReference type="PROSITE-ProRule" id="PRU01231"/>
    </source>
</evidence>
<protein>
    <recommendedName>
        <fullName evidence="1">GTPase Obg</fullName>
        <ecNumber evidence="1">3.6.5.-</ecNumber>
    </recommendedName>
    <alternativeName>
        <fullName evidence="1">GTP-binding protein Obg</fullName>
    </alternativeName>
</protein>
<reference key="1">
    <citation type="submission" date="2008-05" db="EMBL/GenBank/DDBJ databases">
        <title>Complete genome sequence of Clostridium botulinum E3 str. Alaska E43.</title>
        <authorList>
            <person name="Brinkac L.M."/>
            <person name="Brown J.L."/>
            <person name="Bruce D."/>
            <person name="Detter C."/>
            <person name="Munk C."/>
            <person name="Smith L.A."/>
            <person name="Smith T.J."/>
            <person name="Sutton G."/>
            <person name="Brettin T.S."/>
        </authorList>
    </citation>
    <scope>NUCLEOTIDE SEQUENCE [LARGE SCALE GENOMIC DNA]</scope>
    <source>
        <strain>Alaska E43 / Type E3</strain>
    </source>
</reference>
<proteinExistence type="inferred from homology"/>
<accession>B2V0A8</accession>
<feature type="chain" id="PRO_0000385839" description="GTPase Obg">
    <location>
        <begin position="1"/>
        <end position="428"/>
    </location>
</feature>
<feature type="domain" description="Obg" evidence="3">
    <location>
        <begin position="1"/>
        <end position="158"/>
    </location>
</feature>
<feature type="domain" description="OBG-type G" evidence="1">
    <location>
        <begin position="159"/>
        <end position="331"/>
    </location>
</feature>
<feature type="domain" description="OCT" evidence="2">
    <location>
        <begin position="345"/>
        <end position="428"/>
    </location>
</feature>
<feature type="binding site" evidence="1">
    <location>
        <begin position="165"/>
        <end position="172"/>
    </location>
    <ligand>
        <name>GTP</name>
        <dbReference type="ChEBI" id="CHEBI:37565"/>
    </ligand>
</feature>
<feature type="binding site" evidence="1">
    <location>
        <position position="172"/>
    </location>
    <ligand>
        <name>Mg(2+)</name>
        <dbReference type="ChEBI" id="CHEBI:18420"/>
    </ligand>
</feature>
<feature type="binding site" evidence="1">
    <location>
        <begin position="190"/>
        <end position="194"/>
    </location>
    <ligand>
        <name>GTP</name>
        <dbReference type="ChEBI" id="CHEBI:37565"/>
    </ligand>
</feature>
<feature type="binding site" evidence="1">
    <location>
        <position position="192"/>
    </location>
    <ligand>
        <name>Mg(2+)</name>
        <dbReference type="ChEBI" id="CHEBI:18420"/>
    </ligand>
</feature>
<feature type="binding site" evidence="1">
    <location>
        <begin position="212"/>
        <end position="215"/>
    </location>
    <ligand>
        <name>GTP</name>
        <dbReference type="ChEBI" id="CHEBI:37565"/>
    </ligand>
</feature>
<feature type="binding site" evidence="1">
    <location>
        <begin position="282"/>
        <end position="285"/>
    </location>
    <ligand>
        <name>GTP</name>
        <dbReference type="ChEBI" id="CHEBI:37565"/>
    </ligand>
</feature>
<feature type="binding site" evidence="1">
    <location>
        <begin position="312"/>
        <end position="314"/>
    </location>
    <ligand>
        <name>GTP</name>
        <dbReference type="ChEBI" id="CHEBI:37565"/>
    </ligand>
</feature>
<comment type="function">
    <text evidence="1">An essential GTPase which binds GTP, GDP and possibly (p)ppGpp with moderate affinity, with high nucleotide exchange rates and a fairly low GTP hydrolysis rate. Plays a role in control of the cell cycle, stress response, ribosome biogenesis and in those bacteria that undergo differentiation, in morphogenesis control.</text>
</comment>
<comment type="cofactor">
    <cofactor evidence="1">
        <name>Mg(2+)</name>
        <dbReference type="ChEBI" id="CHEBI:18420"/>
    </cofactor>
</comment>
<comment type="subunit">
    <text evidence="1">Monomer.</text>
</comment>
<comment type="subcellular location">
    <subcellularLocation>
        <location evidence="1">Cytoplasm</location>
    </subcellularLocation>
</comment>
<comment type="similarity">
    <text evidence="1">Belongs to the TRAFAC class OBG-HflX-like GTPase superfamily. OBG GTPase family.</text>
</comment>
<keyword id="KW-0963">Cytoplasm</keyword>
<keyword id="KW-0342">GTP-binding</keyword>
<keyword id="KW-0378">Hydrolase</keyword>
<keyword id="KW-0460">Magnesium</keyword>
<keyword id="KW-0479">Metal-binding</keyword>
<keyword id="KW-0547">Nucleotide-binding</keyword>
<name>OBG_CLOBA</name>